<comment type="function">
    <text evidence="5">Involved in protein precursor import into chloroplasts. Part of the redox regulon consisting of TIC32, TIC 55 and TIC62.</text>
</comment>
<comment type="cofactor">
    <cofactor evidence="3">
        <name>[2Fe-2S] cluster</name>
        <dbReference type="ChEBI" id="CHEBI:190135"/>
    </cofactor>
    <text evidence="3">Binds 1 [2Fe-2S] cluster per subunit.</text>
</comment>
<comment type="subunit">
    <text evidence="1">Part of the Tic complex. Interacts with TIC62 and TIC110 (By similarity).</text>
</comment>
<comment type="subcellular location">
    <subcellularLocation>
        <location evidence="5">Plastid</location>
        <location evidence="5">Chloroplast inner membrane</location>
        <topology evidence="5">Multi-pass membrane protein</topology>
    </subcellularLocation>
</comment>
<comment type="tissue specificity">
    <text evidence="4 5">Highly expressed in green tissues and very low levels in non-photosynthetic tissues such as roots and etiolated seedlings.</text>
</comment>
<comment type="induction">
    <text evidence="5">Up-regulated by light.</text>
</comment>
<comment type="disruption phenotype">
    <text evidence="5">No visible phenotype.</text>
</comment>
<evidence type="ECO:0000250" key="1"/>
<evidence type="ECO:0000255" key="2"/>
<evidence type="ECO:0000255" key="3">
    <source>
        <dbReference type="PROSITE-ProRule" id="PRU00628"/>
    </source>
</evidence>
<evidence type="ECO:0000269" key="4">
    <source>
    </source>
</evidence>
<evidence type="ECO:0000269" key="5">
    <source>
    </source>
</evidence>
<evidence type="ECO:0007744" key="6">
    <source>
    </source>
</evidence>
<feature type="transit peptide" description="Chloroplast" evidence="6">
    <location>
        <begin position="1"/>
        <end position="50"/>
    </location>
</feature>
<feature type="chain" id="PRO_0000413678" description="Protein TIC 55, chloroplastic">
    <location>
        <begin position="51"/>
        <end position="539"/>
    </location>
</feature>
<feature type="topological domain" description="Stromal" evidence="1">
    <location>
        <begin position="51"/>
        <end position="482"/>
    </location>
</feature>
<feature type="transmembrane region" description="Helical" evidence="2">
    <location>
        <begin position="483"/>
        <end position="500"/>
    </location>
</feature>
<feature type="topological domain" description="Chloroplast intermembrane" evidence="1">
    <location>
        <begin position="501"/>
        <end position="504"/>
    </location>
</feature>
<feature type="transmembrane region" description="Helical" evidence="2">
    <location>
        <begin position="505"/>
        <end position="527"/>
    </location>
</feature>
<feature type="topological domain" description="Stromal" evidence="1">
    <location>
        <begin position="528"/>
        <end position="539"/>
    </location>
</feature>
<feature type="domain" description="Rieske" evidence="3">
    <location>
        <begin position="88"/>
        <end position="193"/>
    </location>
</feature>
<feature type="short sequence motif" description="Redox-active motif">
    <location>
        <begin position="467"/>
        <end position="470"/>
    </location>
</feature>
<feature type="binding site" evidence="3">
    <location>
        <position position="129"/>
    </location>
    <ligand>
        <name>[2Fe-2S] cluster</name>
        <dbReference type="ChEBI" id="CHEBI:190135"/>
    </ligand>
</feature>
<feature type="binding site" evidence="3">
    <location>
        <position position="131"/>
    </location>
    <ligand>
        <name>[2Fe-2S] cluster</name>
        <dbReference type="ChEBI" id="CHEBI:190135"/>
    </ligand>
</feature>
<feature type="binding site" evidence="3">
    <location>
        <position position="148"/>
    </location>
    <ligand>
        <name>[2Fe-2S] cluster</name>
        <dbReference type="ChEBI" id="CHEBI:190135"/>
    </ligand>
</feature>
<feature type="binding site" evidence="3">
    <location>
        <position position="151"/>
    </location>
    <ligand>
        <name>[2Fe-2S] cluster</name>
        <dbReference type="ChEBI" id="CHEBI:190135"/>
    </ligand>
</feature>
<feature type="binding site" evidence="2">
    <location>
        <position position="242"/>
    </location>
    <ligand>
        <name>Fe cation</name>
        <dbReference type="ChEBI" id="CHEBI:24875"/>
    </ligand>
</feature>
<feature type="binding site" evidence="2">
    <location>
        <position position="247"/>
    </location>
    <ligand>
        <name>Fe cation</name>
        <dbReference type="ChEBI" id="CHEBI:24875"/>
    </ligand>
</feature>
<feature type="modified residue" description="N-acetylalanine" evidence="6">
    <location>
        <position position="51"/>
    </location>
</feature>
<name>TIC55_ARATH</name>
<dbReference type="EMBL" id="AC006585">
    <property type="protein sequence ID" value="AAD23030.1"/>
    <property type="molecule type" value="Genomic_DNA"/>
</dbReference>
<dbReference type="EMBL" id="CP002685">
    <property type="protein sequence ID" value="AEC07632.1"/>
    <property type="molecule type" value="Genomic_DNA"/>
</dbReference>
<dbReference type="EMBL" id="AK221423">
    <property type="protein sequence ID" value="BAD94416.1"/>
    <property type="molecule type" value="mRNA"/>
</dbReference>
<dbReference type="PIR" id="H84640">
    <property type="entry name" value="H84640"/>
</dbReference>
<dbReference type="RefSeq" id="NP_180055.1">
    <property type="nucleotide sequence ID" value="NM_128041.4"/>
</dbReference>
<dbReference type="SMR" id="Q9SK50"/>
<dbReference type="BioGRID" id="2371">
    <property type="interactions" value="1"/>
</dbReference>
<dbReference type="FunCoup" id="Q9SK50">
    <property type="interactions" value="1037"/>
</dbReference>
<dbReference type="STRING" id="3702.Q9SK50"/>
<dbReference type="GlyGen" id="Q9SK50">
    <property type="glycosylation" value="1 site"/>
</dbReference>
<dbReference type="iPTMnet" id="Q9SK50"/>
<dbReference type="PaxDb" id="3702-AT2G24820.1"/>
<dbReference type="ProMEX" id="Q9SK50"/>
<dbReference type="ProteomicsDB" id="234299"/>
<dbReference type="EnsemblPlants" id="AT2G24820.1">
    <property type="protein sequence ID" value="AT2G24820.1"/>
    <property type="gene ID" value="AT2G24820"/>
</dbReference>
<dbReference type="GeneID" id="817019"/>
<dbReference type="Gramene" id="AT2G24820.1">
    <property type="protein sequence ID" value="AT2G24820.1"/>
    <property type="gene ID" value="AT2G24820"/>
</dbReference>
<dbReference type="KEGG" id="ath:AT2G24820"/>
<dbReference type="Araport" id="AT2G24820"/>
<dbReference type="TAIR" id="AT2G24820">
    <property type="gene designation" value="TIC55-II"/>
</dbReference>
<dbReference type="eggNOG" id="ENOG502QT2X">
    <property type="taxonomic scope" value="Eukaryota"/>
</dbReference>
<dbReference type="HOGENOM" id="CLU_003927_0_0_1"/>
<dbReference type="InParanoid" id="Q9SK50"/>
<dbReference type="OMA" id="VWIWMSH"/>
<dbReference type="OrthoDB" id="426882at2759"/>
<dbReference type="PhylomeDB" id="Q9SK50"/>
<dbReference type="BioCyc" id="ARA:AT2G24820-MONOMER"/>
<dbReference type="PRO" id="PR:Q9SK50"/>
<dbReference type="Proteomes" id="UP000006548">
    <property type="component" value="Chromosome 2"/>
</dbReference>
<dbReference type="ExpressionAtlas" id="Q9SK50">
    <property type="expression patterns" value="baseline and differential"/>
</dbReference>
<dbReference type="GO" id="GO:0009507">
    <property type="term" value="C:chloroplast"/>
    <property type="evidence" value="ECO:0007005"/>
    <property type="project" value="TAIR"/>
</dbReference>
<dbReference type="GO" id="GO:0009941">
    <property type="term" value="C:chloroplast envelope"/>
    <property type="evidence" value="ECO:0007005"/>
    <property type="project" value="TAIR"/>
</dbReference>
<dbReference type="GO" id="GO:0009706">
    <property type="term" value="C:chloroplast inner membrane"/>
    <property type="evidence" value="ECO:0007669"/>
    <property type="project" value="UniProtKB-SubCell"/>
</dbReference>
<dbReference type="GO" id="GO:0005773">
    <property type="term" value="C:vacuole"/>
    <property type="evidence" value="ECO:0007005"/>
    <property type="project" value="TAIR"/>
</dbReference>
<dbReference type="GO" id="GO:0051537">
    <property type="term" value="F:2 iron, 2 sulfur cluster binding"/>
    <property type="evidence" value="ECO:0007669"/>
    <property type="project" value="UniProtKB-KW"/>
</dbReference>
<dbReference type="GO" id="GO:0010277">
    <property type="term" value="F:chlorophyllide a oxygenase activity"/>
    <property type="evidence" value="ECO:0007669"/>
    <property type="project" value="InterPro"/>
</dbReference>
<dbReference type="GO" id="GO:0046872">
    <property type="term" value="F:metal ion binding"/>
    <property type="evidence" value="ECO:0007669"/>
    <property type="project" value="UniProtKB-KW"/>
</dbReference>
<dbReference type="GO" id="GO:0045036">
    <property type="term" value="P:protein targeting to chloroplast"/>
    <property type="evidence" value="ECO:0000315"/>
    <property type="project" value="TAIR"/>
</dbReference>
<dbReference type="GO" id="GO:0015031">
    <property type="term" value="P:protein transport"/>
    <property type="evidence" value="ECO:0007669"/>
    <property type="project" value="UniProtKB-KW"/>
</dbReference>
<dbReference type="CDD" id="cd04338">
    <property type="entry name" value="Rieske_RO_Alpha_Tic55"/>
    <property type="match status" value="1"/>
</dbReference>
<dbReference type="FunFam" id="3.90.380.10:FF:000012">
    <property type="entry name" value="Protein TIC 55, chloroplastic"/>
    <property type="match status" value="1"/>
</dbReference>
<dbReference type="Gene3D" id="3.90.380.10">
    <property type="entry name" value="Naphthalene 1,2-dioxygenase Alpha Subunit, Chain A, domain 1"/>
    <property type="match status" value="1"/>
</dbReference>
<dbReference type="Gene3D" id="2.102.10.10">
    <property type="entry name" value="Rieske [2Fe-2S] iron-sulphur domain"/>
    <property type="match status" value="1"/>
</dbReference>
<dbReference type="InterPro" id="IPR050584">
    <property type="entry name" value="Cholesterol_7-desaturase"/>
</dbReference>
<dbReference type="InterPro" id="IPR013626">
    <property type="entry name" value="PaO"/>
</dbReference>
<dbReference type="InterPro" id="IPR017941">
    <property type="entry name" value="Rieske_2Fe-2S"/>
</dbReference>
<dbReference type="InterPro" id="IPR036922">
    <property type="entry name" value="Rieske_2Fe-2S_sf"/>
</dbReference>
<dbReference type="PANTHER" id="PTHR21266">
    <property type="entry name" value="IRON-SULFUR DOMAIN CONTAINING PROTEIN"/>
    <property type="match status" value="1"/>
</dbReference>
<dbReference type="PANTHER" id="PTHR21266:SF29">
    <property type="entry name" value="PROTEIN TIC 55, CHLOROPLASTIC"/>
    <property type="match status" value="1"/>
</dbReference>
<dbReference type="Pfam" id="PF08417">
    <property type="entry name" value="PaO"/>
    <property type="match status" value="1"/>
</dbReference>
<dbReference type="Pfam" id="PF00355">
    <property type="entry name" value="Rieske"/>
    <property type="match status" value="1"/>
</dbReference>
<dbReference type="SUPFAM" id="SSF55961">
    <property type="entry name" value="Bet v1-like"/>
    <property type="match status" value="1"/>
</dbReference>
<dbReference type="SUPFAM" id="SSF50022">
    <property type="entry name" value="ISP domain"/>
    <property type="match status" value="1"/>
</dbReference>
<dbReference type="PROSITE" id="PS51296">
    <property type="entry name" value="RIESKE"/>
    <property type="match status" value="1"/>
</dbReference>
<sequence>MAVPFLSSSLQLTPTSPILFTKVTPTPIIHNHRSTCTIPTKPRLRLLRRSAVAGTAVSDQTEGGGDVLLNPEEEKRVEVADYDWTEEWYPLYLTKNVPEDAPLGLTVYDRQIVLYKDGEGTLRCYEDRCPHRLAKLSEGQLIDGRLECLYHGWQFEGEGKCVKIPQLPASAKIPKAACVKTYEVKDSQGVVWVWMSTKTPPNPEKLPWFENFARPGFFDISTTHELPYDHSILLENLMDPAHVPISHDRTDFTAKREDAQPLVFEVTERSNRGFAGTWGREKEGGKGSNLLRFDAPCVLQNNREFEGKDGVKNYFSGLFLCRPTGQGKSMLIVRFGVTKRSPLVSVLPQWFWHQNACKVFEQDMGFLSSQNEVLMKEKVPTKDLYLNLKSSDTWVAEYRKWMDKVGHGMPYHFGHRTISLPKVPPVVEHAPAGLIAALSASYPAKGGIGTMHAPNLANRYFRHIIHCRSCSNVIKSFELWKNILSATAVALTALAILVVSRQWKAVLLGSAALCSAAAYTCLRAINLNTNNFIRTHRRL</sequence>
<keyword id="KW-0001">2Fe-2S</keyword>
<keyword id="KW-0007">Acetylation</keyword>
<keyword id="KW-0150">Chloroplast</keyword>
<keyword id="KW-0408">Iron</keyword>
<keyword id="KW-0411">Iron-sulfur</keyword>
<keyword id="KW-0472">Membrane</keyword>
<keyword id="KW-0479">Metal-binding</keyword>
<keyword id="KW-0934">Plastid</keyword>
<keyword id="KW-1001">Plastid inner membrane</keyword>
<keyword id="KW-0653">Protein transport</keyword>
<keyword id="KW-1185">Reference proteome</keyword>
<keyword id="KW-0809">Transit peptide</keyword>
<keyword id="KW-0812">Transmembrane</keyword>
<keyword id="KW-1133">Transmembrane helix</keyword>
<keyword id="KW-0813">Transport</keyword>
<gene>
    <name type="primary">TIC55</name>
    <name type="synonym">TIC55-II</name>
    <name type="ordered locus">At2g24820</name>
    <name type="ORF">F27C12.26</name>
</gene>
<organism>
    <name type="scientific">Arabidopsis thaliana</name>
    <name type="common">Mouse-ear cress</name>
    <dbReference type="NCBI Taxonomy" id="3702"/>
    <lineage>
        <taxon>Eukaryota</taxon>
        <taxon>Viridiplantae</taxon>
        <taxon>Streptophyta</taxon>
        <taxon>Embryophyta</taxon>
        <taxon>Tracheophyta</taxon>
        <taxon>Spermatophyta</taxon>
        <taxon>Magnoliopsida</taxon>
        <taxon>eudicotyledons</taxon>
        <taxon>Gunneridae</taxon>
        <taxon>Pentapetalae</taxon>
        <taxon>rosids</taxon>
        <taxon>malvids</taxon>
        <taxon>Brassicales</taxon>
        <taxon>Brassicaceae</taxon>
        <taxon>Camelineae</taxon>
        <taxon>Arabidopsis</taxon>
    </lineage>
</organism>
<proteinExistence type="evidence at protein level"/>
<accession>Q9SK50</accession>
<accession>Q56YA0</accession>
<reference key="1">
    <citation type="journal article" date="1999" name="Nature">
        <title>Sequence and analysis of chromosome 2 of the plant Arabidopsis thaliana.</title>
        <authorList>
            <person name="Lin X."/>
            <person name="Kaul S."/>
            <person name="Rounsley S.D."/>
            <person name="Shea T.P."/>
            <person name="Benito M.-I."/>
            <person name="Town C.D."/>
            <person name="Fujii C.Y."/>
            <person name="Mason T.M."/>
            <person name="Bowman C.L."/>
            <person name="Barnstead M.E."/>
            <person name="Feldblyum T.V."/>
            <person name="Buell C.R."/>
            <person name="Ketchum K.A."/>
            <person name="Lee J.J."/>
            <person name="Ronning C.M."/>
            <person name="Koo H.L."/>
            <person name="Moffat K.S."/>
            <person name="Cronin L.A."/>
            <person name="Shen M."/>
            <person name="Pai G."/>
            <person name="Van Aken S."/>
            <person name="Umayam L."/>
            <person name="Tallon L.J."/>
            <person name="Gill J.E."/>
            <person name="Adams M.D."/>
            <person name="Carrera A.J."/>
            <person name="Creasy T.H."/>
            <person name="Goodman H.M."/>
            <person name="Somerville C.R."/>
            <person name="Copenhaver G.P."/>
            <person name="Preuss D."/>
            <person name="Nierman W.C."/>
            <person name="White O."/>
            <person name="Eisen J.A."/>
            <person name="Salzberg S.L."/>
            <person name="Fraser C.M."/>
            <person name="Venter J.C."/>
        </authorList>
    </citation>
    <scope>NUCLEOTIDE SEQUENCE [LARGE SCALE GENOMIC DNA]</scope>
    <source>
        <strain>cv. Columbia</strain>
    </source>
</reference>
<reference key="2">
    <citation type="journal article" date="2017" name="Plant J.">
        <title>Araport11: a complete reannotation of the Arabidopsis thaliana reference genome.</title>
        <authorList>
            <person name="Cheng C.Y."/>
            <person name="Krishnakumar V."/>
            <person name="Chan A.P."/>
            <person name="Thibaud-Nissen F."/>
            <person name="Schobel S."/>
            <person name="Town C.D."/>
        </authorList>
    </citation>
    <scope>GENOME REANNOTATION</scope>
    <source>
        <strain>cv. Columbia</strain>
    </source>
</reference>
<reference key="3">
    <citation type="submission" date="2005-03" db="EMBL/GenBank/DDBJ databases">
        <title>Large-scale analysis of RIKEN Arabidopsis full-length (RAFL) cDNAs.</title>
        <authorList>
            <person name="Totoki Y."/>
            <person name="Seki M."/>
            <person name="Ishida J."/>
            <person name="Nakajima M."/>
            <person name="Enju A."/>
            <person name="Kamiya A."/>
            <person name="Narusaka M."/>
            <person name="Shin-i T."/>
            <person name="Nakagawa M."/>
            <person name="Sakamoto N."/>
            <person name="Oishi K."/>
            <person name="Kohara Y."/>
            <person name="Kobayashi M."/>
            <person name="Toyoda A."/>
            <person name="Sakaki Y."/>
            <person name="Sakurai T."/>
            <person name="Iida K."/>
            <person name="Akiyama K."/>
            <person name="Satou M."/>
            <person name="Toyoda T."/>
            <person name="Konagaya A."/>
            <person name="Carninci P."/>
            <person name="Kawai J."/>
            <person name="Hayashizaki Y."/>
            <person name="Shinozaki K."/>
        </authorList>
    </citation>
    <scope>NUCLEOTIDE SEQUENCE [LARGE SCALE MRNA] OF 173-477</scope>
    <source>
        <strain>cv. Columbia</strain>
    </source>
</reference>
<reference key="4">
    <citation type="journal article" date="2004" name="J. Biol. Chem.">
        <title>The protein translocon of the plastid envelopes.</title>
        <authorList>
            <person name="Vojta A."/>
            <person name="Alavi M."/>
            <person name="Becker T."/>
            <person name="Hoermann F."/>
            <person name="Kuechler M."/>
            <person name="Soll J."/>
            <person name="Thomson R."/>
            <person name="Schleiff E."/>
        </authorList>
    </citation>
    <scope>TISSUE SPECIFICITY</scope>
</reference>
<reference key="5">
    <citation type="journal article" date="2009" name="Mol. Plant">
        <title>In vivo studies on the roles of Tic55-related proteins in chloroplast protein import in Arabidopsis thaliana.</title>
        <authorList>
            <person name="Boij P."/>
            <person name="Patel R."/>
            <person name="Garcia C."/>
            <person name="Jarvis P."/>
            <person name="Aronsson H."/>
        </authorList>
    </citation>
    <scope>FUNCTION</scope>
    <scope>TISSUE SPECIFICITY</scope>
    <scope>SUBCELLULAR LOCATION</scope>
    <scope>INDUCTION BY LIGHT</scope>
    <scope>DISRUPTION PHENOTYPE</scope>
</reference>
<reference key="6">
    <citation type="journal article" date="2010" name="Biochim. Biophys. Acta">
        <title>Protein import into chloroplasts: the Tic complex and its regulation.</title>
        <authorList>
            <person name="Kovacs-Bogdan E."/>
            <person name="Soll J."/>
            <person name="Bolter B."/>
        </authorList>
    </citation>
    <scope>REVIEW</scope>
</reference>
<reference key="7">
    <citation type="journal article" date="2012" name="Mol. Cell. Proteomics">
        <title>Comparative large-scale characterisation of plant vs. mammal proteins reveals similar and idiosyncratic N-alpha acetylation features.</title>
        <authorList>
            <person name="Bienvenut W.V."/>
            <person name="Sumpton D."/>
            <person name="Martinez A."/>
            <person name="Lilla S."/>
            <person name="Espagne C."/>
            <person name="Meinnel T."/>
            <person name="Giglione C."/>
        </authorList>
    </citation>
    <scope>ACETYLATION [LARGE SCALE ANALYSIS] AT ALA-51</scope>
    <scope>CLEAVAGE OF TRANSIT PEPTIDE [LARGE SCALE ANALYSIS] AFTER SER-50</scope>
    <scope>IDENTIFICATION BY MASS SPECTROMETRY [LARGE SCALE ANALYSIS]</scope>
</reference>
<protein>
    <recommendedName>
        <fullName>Protein TIC 55, chloroplastic</fullName>
    </recommendedName>
    <alternativeName>
        <fullName>Translocon at the inner envelope membrane of chloroplasts 55</fullName>
        <shortName>AtTIC55</shortName>
    </alternativeName>
    <alternativeName>
        <fullName>Translocon at the inner envelope membrane of chloroplasts 55-II</fullName>
    </alternativeName>
</protein>